<accession>Q8ZVU9</accession>
<organism>
    <name type="scientific">Pyrobaculum aerophilum (strain ATCC 51768 / DSM 7523 / JCM 9630 / CIP 104966 / NBRC 100827 / IM2)</name>
    <dbReference type="NCBI Taxonomy" id="178306"/>
    <lineage>
        <taxon>Archaea</taxon>
        <taxon>Thermoproteota</taxon>
        <taxon>Thermoprotei</taxon>
        <taxon>Thermoproteales</taxon>
        <taxon>Thermoproteaceae</taxon>
        <taxon>Pyrobaculum</taxon>
    </lineage>
</organism>
<proteinExistence type="inferred from homology"/>
<protein>
    <recommendedName>
        <fullName evidence="1">DNA primase DnaG</fullName>
        <ecNumber evidence="1">2.7.7.101</ecNumber>
    </recommendedName>
</protein>
<evidence type="ECO:0000255" key="1">
    <source>
        <dbReference type="HAMAP-Rule" id="MF_00007"/>
    </source>
</evidence>
<evidence type="ECO:0000256" key="2">
    <source>
        <dbReference type="SAM" id="MobiDB-lite"/>
    </source>
</evidence>
<dbReference type="EC" id="2.7.7.101" evidence="1"/>
<dbReference type="EMBL" id="AE009441">
    <property type="protein sequence ID" value="AAL63955.1"/>
    <property type="molecule type" value="Genomic_DNA"/>
</dbReference>
<dbReference type="RefSeq" id="WP_011008425.1">
    <property type="nucleotide sequence ID" value="NC_003364.1"/>
</dbReference>
<dbReference type="FunCoup" id="Q8ZVU9">
    <property type="interactions" value="1"/>
</dbReference>
<dbReference type="STRING" id="178306.PAE2112"/>
<dbReference type="EnsemblBacteria" id="AAL63955">
    <property type="protein sequence ID" value="AAL63955"/>
    <property type="gene ID" value="PAE2112"/>
</dbReference>
<dbReference type="GeneID" id="1464288"/>
<dbReference type="KEGG" id="pai:PAE2112"/>
<dbReference type="PATRIC" id="fig|178306.9.peg.1560"/>
<dbReference type="eggNOG" id="arCOG04281">
    <property type="taxonomic scope" value="Archaea"/>
</dbReference>
<dbReference type="HOGENOM" id="CLU_034626_0_0_2"/>
<dbReference type="InParanoid" id="Q8ZVU9"/>
<dbReference type="Proteomes" id="UP000002439">
    <property type="component" value="Chromosome"/>
</dbReference>
<dbReference type="GO" id="GO:0005737">
    <property type="term" value="C:cytoplasm"/>
    <property type="evidence" value="ECO:0000318"/>
    <property type="project" value="GO_Central"/>
</dbReference>
<dbReference type="GO" id="GO:0000428">
    <property type="term" value="C:DNA-directed RNA polymerase complex"/>
    <property type="evidence" value="ECO:0007669"/>
    <property type="project" value="UniProtKB-KW"/>
</dbReference>
<dbReference type="GO" id="GO:0000178">
    <property type="term" value="C:exosome (RNase complex)"/>
    <property type="evidence" value="ECO:0007669"/>
    <property type="project" value="UniProtKB-KW"/>
</dbReference>
<dbReference type="GO" id="GO:1990077">
    <property type="term" value="C:primosome complex"/>
    <property type="evidence" value="ECO:0007669"/>
    <property type="project" value="UniProtKB-KW"/>
</dbReference>
<dbReference type="GO" id="GO:0003899">
    <property type="term" value="F:DNA-directed RNA polymerase activity"/>
    <property type="evidence" value="ECO:0007669"/>
    <property type="project" value="InterPro"/>
</dbReference>
<dbReference type="GO" id="GO:0046872">
    <property type="term" value="F:metal ion binding"/>
    <property type="evidence" value="ECO:0007669"/>
    <property type="project" value="UniProtKB-KW"/>
</dbReference>
<dbReference type="GO" id="GO:0008143">
    <property type="term" value="F:poly(A) binding"/>
    <property type="evidence" value="ECO:0007669"/>
    <property type="project" value="InterPro"/>
</dbReference>
<dbReference type="GO" id="GO:0006269">
    <property type="term" value="P:DNA replication, synthesis of primer"/>
    <property type="evidence" value="ECO:0000318"/>
    <property type="project" value="GO_Central"/>
</dbReference>
<dbReference type="CDD" id="cd01029">
    <property type="entry name" value="TOPRIM_primases"/>
    <property type="match status" value="1"/>
</dbReference>
<dbReference type="FunFam" id="3.40.1360.10:FF:000010">
    <property type="entry name" value="DNA primase DnaG"/>
    <property type="match status" value="1"/>
</dbReference>
<dbReference type="Gene3D" id="3.40.1360.10">
    <property type="match status" value="1"/>
</dbReference>
<dbReference type="HAMAP" id="MF_00007">
    <property type="entry name" value="DNA_primase_DnaG_arc"/>
    <property type="match status" value="1"/>
</dbReference>
<dbReference type="InterPro" id="IPR050219">
    <property type="entry name" value="DnaG_primase"/>
</dbReference>
<dbReference type="InterPro" id="IPR020607">
    <property type="entry name" value="Primase_DnaG_arc"/>
</dbReference>
<dbReference type="InterPro" id="IPR034154">
    <property type="entry name" value="TOPRIM_DnaG/twinkle"/>
</dbReference>
<dbReference type="InterPro" id="IPR006171">
    <property type="entry name" value="TOPRIM_dom"/>
</dbReference>
<dbReference type="NCBIfam" id="NF003108">
    <property type="entry name" value="PRK04031.1-1"/>
    <property type="match status" value="1"/>
</dbReference>
<dbReference type="PANTHER" id="PTHR30313">
    <property type="entry name" value="DNA PRIMASE"/>
    <property type="match status" value="1"/>
</dbReference>
<dbReference type="PANTHER" id="PTHR30313:SF2">
    <property type="entry name" value="DNA PRIMASE"/>
    <property type="match status" value="1"/>
</dbReference>
<dbReference type="Pfam" id="PF13662">
    <property type="entry name" value="Toprim_4"/>
    <property type="match status" value="1"/>
</dbReference>
<dbReference type="SMART" id="SM00493">
    <property type="entry name" value="TOPRIM"/>
    <property type="match status" value="1"/>
</dbReference>
<dbReference type="SUPFAM" id="SSF56731">
    <property type="entry name" value="DNA primase core"/>
    <property type="match status" value="1"/>
</dbReference>
<dbReference type="PROSITE" id="PS50880">
    <property type="entry name" value="TOPRIM"/>
    <property type="match status" value="1"/>
</dbReference>
<comment type="function">
    <text evidence="1">RNA polymerase that catalyzes the synthesis of short RNA molecules used as primers for DNA polymerase during DNA replication. Also part of the exosome, which is a complex involved in RNA degradation. Acts as a poly(A)-binding protein that enhances the interaction between heteromeric, adenine-rich transcripts and the exosome.</text>
</comment>
<comment type="catalytic activity">
    <reaction evidence="1">
        <text>ssDNA + n NTP = ssDNA/pppN(pN)n-1 hybrid + (n-1) diphosphate.</text>
        <dbReference type="EC" id="2.7.7.101"/>
    </reaction>
</comment>
<comment type="cofactor">
    <cofactor evidence="1">
        <name>Mg(2+)</name>
        <dbReference type="ChEBI" id="CHEBI:18420"/>
    </cofactor>
    <text evidence="1">Binds two Mg(2+) per subunit.</text>
</comment>
<comment type="subunit">
    <text evidence="1">Forms a ternary complex with MCM helicase and DNA. Component of the archaeal exosome complex.</text>
</comment>
<comment type="similarity">
    <text evidence="1">Belongs to the archaeal DnaG primase family.</text>
</comment>
<reference key="1">
    <citation type="journal article" date="2002" name="Proc. Natl. Acad. Sci. U.S.A.">
        <title>Genome sequence of the hyperthermophilic crenarchaeon Pyrobaculum aerophilum.</title>
        <authorList>
            <person name="Fitz-Gibbon S.T."/>
            <person name="Ladner H."/>
            <person name="Kim U.-J."/>
            <person name="Stetter K.O."/>
            <person name="Simon M.I."/>
            <person name="Miller J.H."/>
        </authorList>
    </citation>
    <scope>NUCLEOTIDE SEQUENCE [LARGE SCALE GENOMIC DNA]</scope>
    <source>
        <strain>ATCC 51768 / DSM 7523 / JCM 9630 / CIP 104966 / NBRC 100827 / IM2</strain>
    </source>
</reference>
<keyword id="KW-0235">DNA replication</keyword>
<keyword id="KW-0240">DNA-directed RNA polymerase</keyword>
<keyword id="KW-0271">Exosome</keyword>
<keyword id="KW-0460">Magnesium</keyword>
<keyword id="KW-0479">Metal-binding</keyword>
<keyword id="KW-0548">Nucleotidyltransferase</keyword>
<keyword id="KW-0639">Primosome</keyword>
<keyword id="KW-1185">Reference proteome</keyword>
<keyword id="KW-0804">Transcription</keyword>
<keyword id="KW-0808">Transferase</keyword>
<name>DNAG_PYRAE</name>
<sequence length="408" mass="45496">MGALTIVAKYMIVAQIEVNGSVDKSDIIGALFSQTEGLLGKDMDLRELQMMGRIGRIEVDIFEKNGKTKAKIHIPSNLDRYETALVAALIESIERVGPYPAAVKVVEIRDLREEKRKKIIEKAKELVKLIEEEILPDTKEIIEKLKEDVAKAEIIEYGPERLPAGPDVDKSDSIIIVEGRADVVNLVKHGYRNVIALEGISRGVPQTIIELSKKKNVTVFIDGDKGGELVLRELLKVAHVDYIARAPPGKEVEQLTAKEIAKALRNKITLEEWLAQQKAAGEKAETPQQPPPQQPVPQQEVREEAQKPAFPFDITKKIDEMLGTLEAEIYDENWTLVKRLPVRELPDFLTTSGDSIYAIILDGITTQRIVDLAAKKGVKIIVTARTGPLTKVPENMQILTFDQLKKVE</sequence>
<feature type="chain" id="PRO_0000144128" description="DNA primase DnaG">
    <location>
        <begin position="1"/>
        <end position="408"/>
    </location>
</feature>
<feature type="domain" description="Toprim" evidence="1">
    <location>
        <begin position="172"/>
        <end position="248"/>
    </location>
</feature>
<feature type="region of interest" description="Disordered" evidence="2">
    <location>
        <begin position="279"/>
        <end position="304"/>
    </location>
</feature>
<feature type="binding site" evidence="1">
    <location>
        <position position="178"/>
    </location>
    <ligand>
        <name>Mg(2+)</name>
        <dbReference type="ChEBI" id="CHEBI:18420"/>
        <label>1</label>
        <note>catalytic</note>
    </ligand>
</feature>
<feature type="binding site" evidence="1">
    <location>
        <position position="222"/>
    </location>
    <ligand>
        <name>Mg(2+)</name>
        <dbReference type="ChEBI" id="CHEBI:18420"/>
        <label>1</label>
        <note>catalytic</note>
    </ligand>
</feature>
<feature type="binding site" evidence="1">
    <location>
        <position position="222"/>
    </location>
    <ligand>
        <name>Mg(2+)</name>
        <dbReference type="ChEBI" id="CHEBI:18420"/>
        <label>2</label>
    </ligand>
</feature>
<feature type="binding site" evidence="1">
    <location>
        <position position="224"/>
    </location>
    <ligand>
        <name>Mg(2+)</name>
        <dbReference type="ChEBI" id="CHEBI:18420"/>
        <label>2</label>
    </ligand>
</feature>
<gene>
    <name evidence="1" type="primary">dnaG</name>
    <name type="ordered locus">PAE2112</name>
</gene>